<name>DEOB_LEGPC</name>
<comment type="function">
    <text evidence="1">Isomerase that catalyzes the conversion of deoxy-ribose 1-phosphate (dRib-1-P) and ribose 1-phosphate (Rib-1-P) to deoxy-ribose 5-phosphate (dRib-5-P) and ribose 5-phosphate (Rib-5-P), respectively.</text>
</comment>
<comment type="catalytic activity">
    <reaction evidence="1">
        <text>2-deoxy-alpha-D-ribose 1-phosphate = 2-deoxy-D-ribose 5-phosphate</text>
        <dbReference type="Rhea" id="RHEA:27658"/>
        <dbReference type="ChEBI" id="CHEBI:57259"/>
        <dbReference type="ChEBI" id="CHEBI:62877"/>
        <dbReference type="EC" id="5.4.2.7"/>
    </reaction>
</comment>
<comment type="catalytic activity">
    <reaction evidence="1">
        <text>alpha-D-ribose 1-phosphate = D-ribose 5-phosphate</text>
        <dbReference type="Rhea" id="RHEA:18793"/>
        <dbReference type="ChEBI" id="CHEBI:57720"/>
        <dbReference type="ChEBI" id="CHEBI:78346"/>
        <dbReference type="EC" id="5.4.2.7"/>
    </reaction>
</comment>
<comment type="cofactor">
    <cofactor evidence="1">
        <name>Mn(2+)</name>
        <dbReference type="ChEBI" id="CHEBI:29035"/>
    </cofactor>
    <text evidence="1">Binds 2 manganese ions.</text>
</comment>
<comment type="pathway">
    <text evidence="1">Carbohydrate degradation; 2-deoxy-D-ribose 1-phosphate degradation; D-glyceraldehyde 3-phosphate and acetaldehyde from 2-deoxy-alpha-D-ribose 1-phosphate: step 1/2.</text>
</comment>
<comment type="subcellular location">
    <subcellularLocation>
        <location evidence="1">Cytoplasm</location>
    </subcellularLocation>
</comment>
<comment type="similarity">
    <text evidence="1">Belongs to the phosphopentomutase family.</text>
</comment>
<feature type="chain" id="PRO_1000046390" description="Phosphopentomutase">
    <location>
        <begin position="1"/>
        <end position="407"/>
    </location>
</feature>
<feature type="binding site" evidence="1">
    <location>
        <position position="11"/>
    </location>
    <ligand>
        <name>Mn(2+)</name>
        <dbReference type="ChEBI" id="CHEBI:29035"/>
        <label>1</label>
    </ligand>
</feature>
<feature type="binding site" evidence="1">
    <location>
        <position position="305"/>
    </location>
    <ligand>
        <name>Mn(2+)</name>
        <dbReference type="ChEBI" id="CHEBI:29035"/>
        <label>2</label>
    </ligand>
</feature>
<feature type="binding site" evidence="1">
    <location>
        <position position="310"/>
    </location>
    <ligand>
        <name>Mn(2+)</name>
        <dbReference type="ChEBI" id="CHEBI:29035"/>
        <label>2</label>
    </ligand>
</feature>
<feature type="binding site" evidence="1">
    <location>
        <position position="346"/>
    </location>
    <ligand>
        <name>Mn(2+)</name>
        <dbReference type="ChEBI" id="CHEBI:29035"/>
        <label>1</label>
    </ligand>
</feature>
<feature type="binding site" evidence="1">
    <location>
        <position position="347"/>
    </location>
    <ligand>
        <name>Mn(2+)</name>
        <dbReference type="ChEBI" id="CHEBI:29035"/>
        <label>1</label>
    </ligand>
</feature>
<feature type="binding site" evidence="1">
    <location>
        <position position="358"/>
    </location>
    <ligand>
        <name>Mn(2+)</name>
        <dbReference type="ChEBI" id="CHEBI:29035"/>
        <label>2</label>
    </ligand>
</feature>
<keyword id="KW-0963">Cytoplasm</keyword>
<keyword id="KW-0413">Isomerase</keyword>
<keyword id="KW-0464">Manganese</keyword>
<keyword id="KW-0479">Metal-binding</keyword>
<sequence length="407" mass="44441">MTGRVCVLVMDSFGIGASLDAARYGDVGANTLVHIYEACKRGECDIDGVRKGSLMLPNLASKGLYHAAMASSGLPFIDLSALAIPSGYYGYAVEQSLGKDTPSGHWEMAGVPVTFEWGYFPDKPYCFPEELISEFIKQCNLPGVLGEKHASGTIIIDELGEEHIRTGKPIVYTSADSVFQIAAHEEAFGLQRLYDICKIARNLVDKYQIGRVIARPFAGKPGSFKRTGNRKDYATPPPEKTLLDFLKEDGREVIAIGKIADIYAHQGVTQEIKADGNMALFDATLSAMKTAPQGSLVFTNFVDFDSSYGHRRDVAGYAHALEQFDARLPELEVLLQPNDMVFIAADHGCDPTFPGSDHTREHIPVLMFGPQVNSKFIGRRDCFADIGQSIAEHLQLSSPLAHGVSFL</sequence>
<accession>A5IGR8</accession>
<dbReference type="EC" id="5.4.2.7" evidence="1"/>
<dbReference type="EMBL" id="CP000675">
    <property type="protein sequence ID" value="ABQ56568.1"/>
    <property type="molecule type" value="Genomic_DNA"/>
</dbReference>
<dbReference type="RefSeq" id="WP_011945801.1">
    <property type="nucleotide sequence ID" value="NC_009494.2"/>
</dbReference>
<dbReference type="SMR" id="A5IGR8"/>
<dbReference type="KEGG" id="lpc:LPC_2654"/>
<dbReference type="HOGENOM" id="CLU_053861_0_0_6"/>
<dbReference type="UniPathway" id="UPA00002">
    <property type="reaction ID" value="UER00467"/>
</dbReference>
<dbReference type="GO" id="GO:0005829">
    <property type="term" value="C:cytosol"/>
    <property type="evidence" value="ECO:0007669"/>
    <property type="project" value="TreeGrafter"/>
</dbReference>
<dbReference type="GO" id="GO:0000287">
    <property type="term" value="F:magnesium ion binding"/>
    <property type="evidence" value="ECO:0007669"/>
    <property type="project" value="InterPro"/>
</dbReference>
<dbReference type="GO" id="GO:0030145">
    <property type="term" value="F:manganese ion binding"/>
    <property type="evidence" value="ECO:0007669"/>
    <property type="project" value="UniProtKB-UniRule"/>
</dbReference>
<dbReference type="GO" id="GO:0008973">
    <property type="term" value="F:phosphopentomutase activity"/>
    <property type="evidence" value="ECO:0007669"/>
    <property type="project" value="UniProtKB-UniRule"/>
</dbReference>
<dbReference type="GO" id="GO:0006018">
    <property type="term" value="P:2-deoxyribose 1-phosphate catabolic process"/>
    <property type="evidence" value="ECO:0007669"/>
    <property type="project" value="UniProtKB-UniRule"/>
</dbReference>
<dbReference type="GO" id="GO:0006015">
    <property type="term" value="P:5-phosphoribose 1-diphosphate biosynthetic process"/>
    <property type="evidence" value="ECO:0007669"/>
    <property type="project" value="UniProtKB-UniPathway"/>
</dbReference>
<dbReference type="GO" id="GO:0043094">
    <property type="term" value="P:metabolic compound salvage"/>
    <property type="evidence" value="ECO:0007669"/>
    <property type="project" value="InterPro"/>
</dbReference>
<dbReference type="GO" id="GO:0009117">
    <property type="term" value="P:nucleotide metabolic process"/>
    <property type="evidence" value="ECO:0007669"/>
    <property type="project" value="InterPro"/>
</dbReference>
<dbReference type="CDD" id="cd16009">
    <property type="entry name" value="PPM"/>
    <property type="match status" value="1"/>
</dbReference>
<dbReference type="FunFam" id="3.30.70.1250:FF:000001">
    <property type="entry name" value="Phosphopentomutase"/>
    <property type="match status" value="1"/>
</dbReference>
<dbReference type="Gene3D" id="3.40.720.10">
    <property type="entry name" value="Alkaline Phosphatase, subunit A"/>
    <property type="match status" value="1"/>
</dbReference>
<dbReference type="Gene3D" id="3.30.70.1250">
    <property type="entry name" value="Phosphopentomutase"/>
    <property type="match status" value="1"/>
</dbReference>
<dbReference type="HAMAP" id="MF_00740">
    <property type="entry name" value="Phosphopentomut"/>
    <property type="match status" value="1"/>
</dbReference>
<dbReference type="InterPro" id="IPR017850">
    <property type="entry name" value="Alkaline_phosphatase_core_sf"/>
</dbReference>
<dbReference type="InterPro" id="IPR010045">
    <property type="entry name" value="DeoB"/>
</dbReference>
<dbReference type="InterPro" id="IPR006124">
    <property type="entry name" value="Metalloenzyme"/>
</dbReference>
<dbReference type="InterPro" id="IPR024052">
    <property type="entry name" value="Phosphopentomutase_DeoB_cap_sf"/>
</dbReference>
<dbReference type="NCBIfam" id="TIGR01696">
    <property type="entry name" value="deoB"/>
    <property type="match status" value="1"/>
</dbReference>
<dbReference type="NCBIfam" id="NF003766">
    <property type="entry name" value="PRK05362.1"/>
    <property type="match status" value="1"/>
</dbReference>
<dbReference type="PANTHER" id="PTHR21110">
    <property type="entry name" value="PHOSPHOPENTOMUTASE"/>
    <property type="match status" value="1"/>
</dbReference>
<dbReference type="PANTHER" id="PTHR21110:SF0">
    <property type="entry name" value="PHOSPHOPENTOMUTASE"/>
    <property type="match status" value="1"/>
</dbReference>
<dbReference type="Pfam" id="PF01676">
    <property type="entry name" value="Metalloenzyme"/>
    <property type="match status" value="1"/>
</dbReference>
<dbReference type="PIRSF" id="PIRSF001491">
    <property type="entry name" value="Ppentomutase"/>
    <property type="match status" value="1"/>
</dbReference>
<dbReference type="SUPFAM" id="SSF53649">
    <property type="entry name" value="Alkaline phosphatase-like"/>
    <property type="match status" value="1"/>
</dbReference>
<dbReference type="SUPFAM" id="SSF143856">
    <property type="entry name" value="DeoB insert domain-like"/>
    <property type="match status" value="1"/>
</dbReference>
<reference key="1">
    <citation type="submission" date="2006-11" db="EMBL/GenBank/DDBJ databases">
        <title>Identification and characterization of a new conjugation/ type IVA secretion system (trb/tra) of L. pneumophila Corby localized on a mobile genomic island.</title>
        <authorList>
            <person name="Gloeckner G."/>
            <person name="Albert-Weissenberger C."/>
            <person name="Weinmann E."/>
            <person name="Jacobi S."/>
            <person name="Schunder E."/>
            <person name="Steinert M."/>
            <person name="Buchrieser C."/>
            <person name="Hacker J."/>
            <person name="Heuner K."/>
        </authorList>
    </citation>
    <scope>NUCLEOTIDE SEQUENCE [LARGE SCALE GENOMIC DNA]</scope>
    <source>
        <strain>Corby</strain>
    </source>
</reference>
<protein>
    <recommendedName>
        <fullName evidence="1">Phosphopentomutase</fullName>
        <ecNumber evidence="1">5.4.2.7</ecNumber>
    </recommendedName>
    <alternativeName>
        <fullName evidence="1">Phosphodeoxyribomutase</fullName>
    </alternativeName>
</protein>
<organism>
    <name type="scientific">Legionella pneumophila (strain Corby)</name>
    <dbReference type="NCBI Taxonomy" id="400673"/>
    <lineage>
        <taxon>Bacteria</taxon>
        <taxon>Pseudomonadati</taxon>
        <taxon>Pseudomonadota</taxon>
        <taxon>Gammaproteobacteria</taxon>
        <taxon>Legionellales</taxon>
        <taxon>Legionellaceae</taxon>
        <taxon>Legionella</taxon>
    </lineage>
</organism>
<evidence type="ECO:0000255" key="1">
    <source>
        <dbReference type="HAMAP-Rule" id="MF_00740"/>
    </source>
</evidence>
<gene>
    <name evidence="1" type="primary">deoB</name>
    <name type="ordered locus">LPC_2654</name>
</gene>
<proteinExistence type="inferred from homology"/>